<feature type="transit peptide" description="Chloroplast" evidence="2">
    <location>
        <begin position="1"/>
        <end position="60"/>
    </location>
</feature>
<feature type="chain" id="PRO_0000019957" description="Nudix hydrolase 14, chloroplastic">
    <location>
        <begin position="61"/>
        <end position="309"/>
    </location>
</feature>
<feature type="domain" description="Nudix hydrolase" evidence="3">
    <location>
        <begin position="139"/>
        <end position="292"/>
    </location>
</feature>
<feature type="short sequence motif" description="Nudix box">
    <location>
        <begin position="179"/>
        <end position="200"/>
    </location>
</feature>
<feature type="binding site" evidence="1">
    <location>
        <position position="194"/>
    </location>
    <ligand>
        <name>Mg(2+)</name>
        <dbReference type="ChEBI" id="CHEBI:18420"/>
    </ligand>
</feature>
<feature type="binding site" evidence="1">
    <location>
        <position position="198"/>
    </location>
    <ligand>
        <name>Mg(2+)</name>
        <dbReference type="ChEBI" id="CHEBI:18420"/>
    </ligand>
</feature>
<dbReference type="EC" id="3.6.1.21"/>
<dbReference type="EMBL" id="AJ748742">
    <property type="protein sequence ID" value="CAG38620.1"/>
    <property type="molecule type" value="mRNA"/>
</dbReference>
<dbReference type="EMBL" id="AL049638">
    <property type="protein sequence ID" value="CAB40939.1"/>
    <property type="status" value="ALT_SEQ"/>
    <property type="molecule type" value="Genomic_DNA"/>
</dbReference>
<dbReference type="EMBL" id="AL161533">
    <property type="protein sequence ID" value="CAB78241.1"/>
    <property type="status" value="ALT_SEQ"/>
    <property type="molecule type" value="Genomic_DNA"/>
</dbReference>
<dbReference type="EMBL" id="CP002687">
    <property type="protein sequence ID" value="AEE83079.1"/>
    <property type="molecule type" value="Genomic_DNA"/>
</dbReference>
<dbReference type="EMBL" id="AY052271">
    <property type="protein sequence ID" value="AAK96464.1"/>
    <property type="molecule type" value="mRNA"/>
</dbReference>
<dbReference type="EMBL" id="BT001146">
    <property type="protein sequence ID" value="AAN64537.1"/>
    <property type="molecule type" value="mRNA"/>
</dbReference>
<dbReference type="PIR" id="T06605">
    <property type="entry name" value="T06605"/>
</dbReference>
<dbReference type="RefSeq" id="NP_567384.1">
    <property type="nucleotide sequence ID" value="NM_117268.3"/>
</dbReference>
<dbReference type="SMR" id="Q9SZ63"/>
<dbReference type="FunCoup" id="Q9SZ63">
    <property type="interactions" value="429"/>
</dbReference>
<dbReference type="STRING" id="3702.Q9SZ63"/>
<dbReference type="PaxDb" id="3702-AT4G11980.1"/>
<dbReference type="ProteomicsDB" id="248735"/>
<dbReference type="EnsemblPlants" id="AT4G11980.1">
    <property type="protein sequence ID" value="AT4G11980.1"/>
    <property type="gene ID" value="AT4G11980"/>
</dbReference>
<dbReference type="GeneID" id="826805"/>
<dbReference type="Gramene" id="AT4G11980.1">
    <property type="protein sequence ID" value="AT4G11980.1"/>
    <property type="gene ID" value="AT4G11980"/>
</dbReference>
<dbReference type="KEGG" id="ath:AT4G11980"/>
<dbReference type="Araport" id="AT4G11980"/>
<dbReference type="TAIR" id="AT4G11980">
    <property type="gene designation" value="NUDX14"/>
</dbReference>
<dbReference type="eggNOG" id="KOG3041">
    <property type="taxonomic scope" value="Eukaryota"/>
</dbReference>
<dbReference type="HOGENOM" id="CLU_070130_1_1_1"/>
<dbReference type="InParanoid" id="Q9SZ63"/>
<dbReference type="OMA" id="GCDEFIP"/>
<dbReference type="PhylomeDB" id="Q9SZ63"/>
<dbReference type="BioCyc" id="ARA:AT4G11980-MONOMER"/>
<dbReference type="SABIO-RK" id="Q9SZ63"/>
<dbReference type="PRO" id="PR:Q9SZ63"/>
<dbReference type="Proteomes" id="UP000006548">
    <property type="component" value="Chromosome 4"/>
</dbReference>
<dbReference type="ExpressionAtlas" id="Q9SZ63">
    <property type="expression patterns" value="baseline and differential"/>
</dbReference>
<dbReference type="GO" id="GO:0009507">
    <property type="term" value="C:chloroplast"/>
    <property type="evidence" value="ECO:0000314"/>
    <property type="project" value="TAIR"/>
</dbReference>
<dbReference type="GO" id="GO:0009570">
    <property type="term" value="C:chloroplast stroma"/>
    <property type="evidence" value="ECO:0007005"/>
    <property type="project" value="TAIR"/>
</dbReference>
<dbReference type="GO" id="GO:0080042">
    <property type="term" value="F:ADP-glucose pyrophosphohydrolase activity"/>
    <property type="evidence" value="ECO:0000314"/>
    <property type="project" value="TAIR"/>
</dbReference>
<dbReference type="GO" id="GO:0080041">
    <property type="term" value="F:ADP-ribose pyrophosphohydrolase activity"/>
    <property type="evidence" value="ECO:0000314"/>
    <property type="project" value="TAIR"/>
</dbReference>
<dbReference type="GO" id="GO:0019144">
    <property type="term" value="F:ADP-sugar diphosphatase activity"/>
    <property type="evidence" value="ECO:0000314"/>
    <property type="project" value="TAIR"/>
</dbReference>
<dbReference type="GO" id="GO:0046872">
    <property type="term" value="F:metal ion binding"/>
    <property type="evidence" value="ECO:0007669"/>
    <property type="project" value="UniProtKB-KW"/>
</dbReference>
<dbReference type="CDD" id="cd03424">
    <property type="entry name" value="NUDIX_ADPRase_Nudt5_UGPPase_Nudt14"/>
    <property type="match status" value="1"/>
</dbReference>
<dbReference type="FunFam" id="3.90.79.10:FF:000050">
    <property type="entry name" value="Nudix hydrolase 14 chloroplastic"/>
    <property type="match status" value="1"/>
</dbReference>
<dbReference type="Gene3D" id="3.90.79.10">
    <property type="entry name" value="Nucleoside Triphosphate Pyrophosphohydrolase"/>
    <property type="match status" value="1"/>
</dbReference>
<dbReference type="InterPro" id="IPR015797">
    <property type="entry name" value="NUDIX_hydrolase-like_dom_sf"/>
</dbReference>
<dbReference type="InterPro" id="IPR000086">
    <property type="entry name" value="NUDIX_hydrolase_dom"/>
</dbReference>
<dbReference type="PANTHER" id="PTHR11839:SF18">
    <property type="entry name" value="NUDIX HYDROLASE DOMAIN-CONTAINING PROTEIN"/>
    <property type="match status" value="1"/>
</dbReference>
<dbReference type="PANTHER" id="PTHR11839">
    <property type="entry name" value="UDP/ADP-SUGAR PYROPHOSPHATASE"/>
    <property type="match status" value="1"/>
</dbReference>
<dbReference type="Pfam" id="PF00293">
    <property type="entry name" value="NUDIX"/>
    <property type="match status" value="1"/>
</dbReference>
<dbReference type="SUPFAM" id="SSF55811">
    <property type="entry name" value="Nudix"/>
    <property type="match status" value="1"/>
</dbReference>
<dbReference type="PROSITE" id="PS51462">
    <property type="entry name" value="NUDIX"/>
    <property type="match status" value="1"/>
</dbReference>
<sequence length="309" mass="34254">MAGFTLLPSRLLAFPSRALPRRLHHHHAKLILRCKMSSSSSSLTQSITLPSQPNEPVLVSATAGISSSDFRDAIDSSLFRNWLRNLESESGILADGSMTLKQVLIQGVDMFGKRIGFLKFKADIFDKETGQKVPGIVFARGPAVAVLILLESDGETYAVLTEQVRVPTGKIVLELPAGMLDDDKGDFVGTAVREVEEEIGIKLKKEDMVDLTAFLDPSTGYRIFPSPGGCDEEMSVFLYRGQVEKETIRQLQGKETGLREHGEFIKVRLIPYRELWRKTADAKVLMSIGLYEMAQREGLVSSQRLKPNS</sequence>
<accession>Q9SZ63</accession>
<accession>Q4R0T9</accession>
<accession>Q941C3</accession>
<gene>
    <name type="primary">NUDT14</name>
    <name type="synonym">ASPP</name>
    <name type="synonym">NUDX14</name>
    <name type="ordered locus">At4g11980</name>
    <name type="ORF">F16J13.50</name>
</gene>
<comment type="function">
    <text evidence="4">Mediates the hydrolysis of some nucleoside diphosphate derivatives. Can use ADP-glucose, ADP-mannose and ADP-ribose as substrates. Regulates the intracellular ADP-glucose levels linked to starch biosynthesis.</text>
</comment>
<comment type="catalytic activity">
    <reaction>
        <text>ADP-sugar + H2O = AMP + alpha-D-aldose 1-phosphate.</text>
        <dbReference type="EC" id="3.6.1.21"/>
    </reaction>
</comment>
<comment type="cofactor">
    <cofactor evidence="1">
        <name>Mg(2+)</name>
        <dbReference type="ChEBI" id="CHEBI:18420"/>
    </cofactor>
    <cofactor evidence="1">
        <name>Mn(2+)</name>
        <dbReference type="ChEBI" id="CHEBI:29035"/>
    </cofactor>
</comment>
<comment type="biophysicochemical properties">
    <kinetics>
        <KM evidence="5">13 uM for ADP-ribose</KM>
        <KM evidence="5">1235 uM for ADP-glucose</KM>
        <Vmax evidence="5">12.5 umol/min/mg enzyme with ADP-ribose as substrate</Vmax>
        <Vmax evidence="5">30.0 umol/min/mg enzyme with ADP-glucose as substrate</Vmax>
    </kinetics>
</comment>
<comment type="subunit">
    <text evidence="4">Homodimer.</text>
</comment>
<comment type="subcellular location">
    <subcellularLocation>
        <location evidence="4 5">Plastid</location>
        <location evidence="4 5">Chloroplast</location>
    </subcellularLocation>
</comment>
<comment type="tissue specificity">
    <text evidence="5">Expressed in roots, leaves, stems and inflorescences.</text>
</comment>
<comment type="disruption phenotype">
    <text evidence="5">No visible phenotype under normal growth conditions.</text>
</comment>
<comment type="similarity">
    <text evidence="6">Belongs to the Nudix hydrolase family.</text>
</comment>
<comment type="sequence caution" evidence="6">
    <conflict type="erroneous gene model prediction">
        <sequence resource="EMBL-CDS" id="CAB40939"/>
    </conflict>
</comment>
<comment type="sequence caution" evidence="6">
    <conflict type="erroneous gene model prediction">
        <sequence resource="EMBL-CDS" id="CAB78241"/>
    </conflict>
</comment>
<proteinExistence type="evidence at protein level"/>
<reference key="1">
    <citation type="journal article" date="2006" name="Plant Cell Physiol.">
        <title>Cloning, expression and characterization of a Nudix hydrolase that catalyzes the hydrolytic breakdown of ADP-glucose linked to starch biosynthesis in Arabidopsis thaliana.</title>
        <authorList>
            <person name="Munoz F.J."/>
            <person name="Baroja-Fernandez E."/>
            <person name="Moran-Zorzano M.T."/>
            <person name="Alonso-Casajus N."/>
            <person name="Pozueta-Romero J."/>
        </authorList>
    </citation>
    <scope>NUCLEOTIDE SEQUENCE [MRNA]</scope>
    <scope>FUNCTION</scope>
    <scope>SUBUNIT</scope>
    <scope>SUBCELLULAR LOCATION</scope>
    <source>
        <strain>cv. Columbia</strain>
        <tissue>Leaf</tissue>
    </source>
</reference>
<reference key="2">
    <citation type="journal article" date="1999" name="Nature">
        <title>Sequence and analysis of chromosome 4 of the plant Arabidopsis thaliana.</title>
        <authorList>
            <person name="Mayer K.F.X."/>
            <person name="Schueller C."/>
            <person name="Wambutt R."/>
            <person name="Murphy G."/>
            <person name="Volckaert G."/>
            <person name="Pohl T."/>
            <person name="Duesterhoeft A."/>
            <person name="Stiekema W."/>
            <person name="Entian K.-D."/>
            <person name="Terryn N."/>
            <person name="Harris B."/>
            <person name="Ansorge W."/>
            <person name="Brandt P."/>
            <person name="Grivell L.A."/>
            <person name="Rieger M."/>
            <person name="Weichselgartner M."/>
            <person name="de Simone V."/>
            <person name="Obermaier B."/>
            <person name="Mache R."/>
            <person name="Mueller M."/>
            <person name="Kreis M."/>
            <person name="Delseny M."/>
            <person name="Puigdomenech P."/>
            <person name="Watson M."/>
            <person name="Schmidtheini T."/>
            <person name="Reichert B."/>
            <person name="Portetelle D."/>
            <person name="Perez-Alonso M."/>
            <person name="Boutry M."/>
            <person name="Bancroft I."/>
            <person name="Vos P."/>
            <person name="Hoheisel J."/>
            <person name="Zimmermann W."/>
            <person name="Wedler H."/>
            <person name="Ridley P."/>
            <person name="Langham S.-A."/>
            <person name="McCullagh B."/>
            <person name="Bilham L."/>
            <person name="Robben J."/>
            <person name="van der Schueren J."/>
            <person name="Grymonprez B."/>
            <person name="Chuang Y.-J."/>
            <person name="Vandenbussche F."/>
            <person name="Braeken M."/>
            <person name="Weltjens I."/>
            <person name="Voet M."/>
            <person name="Bastiaens I."/>
            <person name="Aert R."/>
            <person name="Defoor E."/>
            <person name="Weitzenegger T."/>
            <person name="Bothe G."/>
            <person name="Ramsperger U."/>
            <person name="Hilbert H."/>
            <person name="Braun M."/>
            <person name="Holzer E."/>
            <person name="Brandt A."/>
            <person name="Peters S."/>
            <person name="van Staveren M."/>
            <person name="Dirkse W."/>
            <person name="Mooijman P."/>
            <person name="Klein Lankhorst R."/>
            <person name="Rose M."/>
            <person name="Hauf J."/>
            <person name="Koetter P."/>
            <person name="Berneiser S."/>
            <person name="Hempel S."/>
            <person name="Feldpausch M."/>
            <person name="Lamberth S."/>
            <person name="Van den Daele H."/>
            <person name="De Keyser A."/>
            <person name="Buysshaert C."/>
            <person name="Gielen J."/>
            <person name="Villarroel R."/>
            <person name="De Clercq R."/>
            <person name="van Montagu M."/>
            <person name="Rogers J."/>
            <person name="Cronin A."/>
            <person name="Quail M.A."/>
            <person name="Bray-Allen S."/>
            <person name="Clark L."/>
            <person name="Doggett J."/>
            <person name="Hall S."/>
            <person name="Kay M."/>
            <person name="Lennard N."/>
            <person name="McLay K."/>
            <person name="Mayes R."/>
            <person name="Pettett A."/>
            <person name="Rajandream M.A."/>
            <person name="Lyne M."/>
            <person name="Benes V."/>
            <person name="Rechmann S."/>
            <person name="Borkova D."/>
            <person name="Bloecker H."/>
            <person name="Scharfe M."/>
            <person name="Grimm M."/>
            <person name="Loehnert T.-H."/>
            <person name="Dose S."/>
            <person name="de Haan M."/>
            <person name="Maarse A.C."/>
            <person name="Schaefer M."/>
            <person name="Mueller-Auer S."/>
            <person name="Gabel C."/>
            <person name="Fuchs M."/>
            <person name="Fartmann B."/>
            <person name="Granderath K."/>
            <person name="Dauner D."/>
            <person name="Herzl A."/>
            <person name="Neumann S."/>
            <person name="Argiriou A."/>
            <person name="Vitale D."/>
            <person name="Liguori R."/>
            <person name="Piravandi E."/>
            <person name="Massenet O."/>
            <person name="Quigley F."/>
            <person name="Clabauld G."/>
            <person name="Muendlein A."/>
            <person name="Felber R."/>
            <person name="Schnabl S."/>
            <person name="Hiller R."/>
            <person name="Schmidt W."/>
            <person name="Lecharny A."/>
            <person name="Aubourg S."/>
            <person name="Chefdor F."/>
            <person name="Cooke R."/>
            <person name="Berger C."/>
            <person name="Monfort A."/>
            <person name="Casacuberta E."/>
            <person name="Gibbons T."/>
            <person name="Weber N."/>
            <person name="Vandenbol M."/>
            <person name="Bargues M."/>
            <person name="Terol J."/>
            <person name="Torres A."/>
            <person name="Perez-Perez A."/>
            <person name="Purnelle B."/>
            <person name="Bent E."/>
            <person name="Johnson S."/>
            <person name="Tacon D."/>
            <person name="Jesse T."/>
            <person name="Heijnen L."/>
            <person name="Schwarz S."/>
            <person name="Scholler P."/>
            <person name="Heber S."/>
            <person name="Francs P."/>
            <person name="Bielke C."/>
            <person name="Frishman D."/>
            <person name="Haase D."/>
            <person name="Lemcke K."/>
            <person name="Mewes H.-W."/>
            <person name="Stocker S."/>
            <person name="Zaccaria P."/>
            <person name="Bevan M."/>
            <person name="Wilson R.K."/>
            <person name="de la Bastide M."/>
            <person name="Habermann K."/>
            <person name="Parnell L."/>
            <person name="Dedhia N."/>
            <person name="Gnoj L."/>
            <person name="Schutz K."/>
            <person name="Huang E."/>
            <person name="Spiegel L."/>
            <person name="Sekhon M."/>
            <person name="Murray J."/>
            <person name="Sheet P."/>
            <person name="Cordes M."/>
            <person name="Abu-Threideh J."/>
            <person name="Stoneking T."/>
            <person name="Kalicki J."/>
            <person name="Graves T."/>
            <person name="Harmon G."/>
            <person name="Edwards J."/>
            <person name="Latreille P."/>
            <person name="Courtney L."/>
            <person name="Cloud J."/>
            <person name="Abbott A."/>
            <person name="Scott K."/>
            <person name="Johnson D."/>
            <person name="Minx P."/>
            <person name="Bentley D."/>
            <person name="Fulton B."/>
            <person name="Miller N."/>
            <person name="Greco T."/>
            <person name="Kemp K."/>
            <person name="Kramer J."/>
            <person name="Fulton L."/>
            <person name="Mardis E."/>
            <person name="Dante M."/>
            <person name="Pepin K."/>
            <person name="Hillier L.W."/>
            <person name="Nelson J."/>
            <person name="Spieth J."/>
            <person name="Ryan E."/>
            <person name="Andrews S."/>
            <person name="Geisel C."/>
            <person name="Layman D."/>
            <person name="Du H."/>
            <person name="Ali J."/>
            <person name="Berghoff A."/>
            <person name="Jones K."/>
            <person name="Drone K."/>
            <person name="Cotton M."/>
            <person name="Joshu C."/>
            <person name="Antonoiu B."/>
            <person name="Zidanic M."/>
            <person name="Strong C."/>
            <person name="Sun H."/>
            <person name="Lamar B."/>
            <person name="Yordan C."/>
            <person name="Ma P."/>
            <person name="Zhong J."/>
            <person name="Preston R."/>
            <person name="Vil D."/>
            <person name="Shekher M."/>
            <person name="Matero A."/>
            <person name="Shah R."/>
            <person name="Swaby I.K."/>
            <person name="O'Shaughnessy A."/>
            <person name="Rodriguez M."/>
            <person name="Hoffman J."/>
            <person name="Till S."/>
            <person name="Granat S."/>
            <person name="Shohdy N."/>
            <person name="Hasegawa A."/>
            <person name="Hameed A."/>
            <person name="Lodhi M."/>
            <person name="Johnson A."/>
            <person name="Chen E."/>
            <person name="Marra M.A."/>
            <person name="Martienssen R."/>
            <person name="McCombie W.R."/>
        </authorList>
    </citation>
    <scope>NUCLEOTIDE SEQUENCE [LARGE SCALE GENOMIC DNA]</scope>
    <source>
        <strain>cv. Columbia</strain>
    </source>
</reference>
<reference key="3">
    <citation type="journal article" date="2017" name="Plant J.">
        <title>Araport11: a complete reannotation of the Arabidopsis thaliana reference genome.</title>
        <authorList>
            <person name="Cheng C.Y."/>
            <person name="Krishnakumar V."/>
            <person name="Chan A.P."/>
            <person name="Thibaud-Nissen F."/>
            <person name="Schobel S."/>
            <person name="Town C.D."/>
        </authorList>
    </citation>
    <scope>GENOME REANNOTATION</scope>
    <source>
        <strain>cv. Columbia</strain>
    </source>
</reference>
<reference key="4">
    <citation type="journal article" date="2003" name="Science">
        <title>Empirical analysis of transcriptional activity in the Arabidopsis genome.</title>
        <authorList>
            <person name="Yamada K."/>
            <person name="Lim J."/>
            <person name="Dale J.M."/>
            <person name="Chen H."/>
            <person name="Shinn P."/>
            <person name="Palm C.J."/>
            <person name="Southwick A.M."/>
            <person name="Wu H.C."/>
            <person name="Kim C.J."/>
            <person name="Nguyen M."/>
            <person name="Pham P.K."/>
            <person name="Cheuk R.F."/>
            <person name="Karlin-Newmann G."/>
            <person name="Liu S.X."/>
            <person name="Lam B."/>
            <person name="Sakano H."/>
            <person name="Wu T."/>
            <person name="Yu G."/>
            <person name="Miranda M."/>
            <person name="Quach H.L."/>
            <person name="Tripp M."/>
            <person name="Chang C.H."/>
            <person name="Lee J.M."/>
            <person name="Toriumi M.J."/>
            <person name="Chan M.M."/>
            <person name="Tang C.C."/>
            <person name="Onodera C.S."/>
            <person name="Deng J.M."/>
            <person name="Akiyama K."/>
            <person name="Ansari Y."/>
            <person name="Arakawa T."/>
            <person name="Banh J."/>
            <person name="Banno F."/>
            <person name="Bowser L."/>
            <person name="Brooks S.Y."/>
            <person name="Carninci P."/>
            <person name="Chao Q."/>
            <person name="Choy N."/>
            <person name="Enju A."/>
            <person name="Goldsmith A.D."/>
            <person name="Gurjal M."/>
            <person name="Hansen N.F."/>
            <person name="Hayashizaki Y."/>
            <person name="Johnson-Hopson C."/>
            <person name="Hsuan V.W."/>
            <person name="Iida K."/>
            <person name="Karnes M."/>
            <person name="Khan S."/>
            <person name="Koesema E."/>
            <person name="Ishida J."/>
            <person name="Jiang P.X."/>
            <person name="Jones T."/>
            <person name="Kawai J."/>
            <person name="Kamiya A."/>
            <person name="Meyers C."/>
            <person name="Nakajima M."/>
            <person name="Narusaka M."/>
            <person name="Seki M."/>
            <person name="Sakurai T."/>
            <person name="Satou M."/>
            <person name="Tamse R."/>
            <person name="Vaysberg M."/>
            <person name="Wallender E.K."/>
            <person name="Wong C."/>
            <person name="Yamamura Y."/>
            <person name="Yuan S."/>
            <person name="Shinozaki K."/>
            <person name="Davis R.W."/>
            <person name="Theologis A."/>
            <person name="Ecker J.R."/>
        </authorList>
    </citation>
    <scope>NUCLEOTIDE SEQUENCE [LARGE SCALE MRNA]</scope>
    <source>
        <strain>cv. Columbia</strain>
    </source>
</reference>
<reference key="5">
    <citation type="journal article" date="2005" name="J. Biol. Chem.">
        <title>Comprehensive analysis of cytosolic nudix hydrolases in Arabidopsis thaliana.</title>
        <authorList>
            <person name="Ogawa T."/>
            <person name="Ueda Y."/>
            <person name="Yoshimura K."/>
            <person name="Shigeoka S."/>
        </authorList>
    </citation>
    <scope>NOMENCLATURE</scope>
</reference>
<reference key="6">
    <citation type="journal article" date="2008" name="Plant Physiol.">
        <title>Molecular characterization of organelle-type Nudix hydrolases in Arabidopsis.</title>
        <authorList>
            <person name="Ogawa T."/>
            <person name="Yoshimura K."/>
            <person name="Miyake H."/>
            <person name="Ishikawa K."/>
            <person name="Ito D."/>
            <person name="Tanabe N."/>
            <person name="Shigeoka S."/>
        </authorList>
    </citation>
    <scope>SUBCELLULAR LOCATION</scope>
    <scope>TISSUE SPECIFICITY</scope>
    <scope>BIOPHYSICOCHEMICAL PROPERTIES</scope>
    <scope>DISRUPTION PHENOTYPE</scope>
</reference>
<organism>
    <name type="scientific">Arabidopsis thaliana</name>
    <name type="common">Mouse-ear cress</name>
    <dbReference type="NCBI Taxonomy" id="3702"/>
    <lineage>
        <taxon>Eukaryota</taxon>
        <taxon>Viridiplantae</taxon>
        <taxon>Streptophyta</taxon>
        <taxon>Embryophyta</taxon>
        <taxon>Tracheophyta</taxon>
        <taxon>Spermatophyta</taxon>
        <taxon>Magnoliopsida</taxon>
        <taxon>eudicotyledons</taxon>
        <taxon>Gunneridae</taxon>
        <taxon>Pentapetalae</taxon>
        <taxon>rosids</taxon>
        <taxon>malvids</taxon>
        <taxon>Brassicales</taxon>
        <taxon>Brassicaceae</taxon>
        <taxon>Camelineae</taxon>
        <taxon>Arabidopsis</taxon>
    </lineage>
</organism>
<protein>
    <recommendedName>
        <fullName>Nudix hydrolase 14, chloroplastic</fullName>
        <shortName>AtNUDT14</shortName>
        <ecNumber>3.6.1.21</ecNumber>
    </recommendedName>
    <alternativeName>
        <fullName>ADP-sugar diphosphatase</fullName>
        <shortName>AtASPP</shortName>
    </alternativeName>
</protein>
<name>NUD14_ARATH</name>
<keyword id="KW-0150">Chloroplast</keyword>
<keyword id="KW-0378">Hydrolase</keyword>
<keyword id="KW-0460">Magnesium</keyword>
<keyword id="KW-0464">Manganese</keyword>
<keyword id="KW-0479">Metal-binding</keyword>
<keyword id="KW-0934">Plastid</keyword>
<keyword id="KW-1185">Reference proteome</keyword>
<keyword id="KW-0809">Transit peptide</keyword>
<evidence type="ECO:0000250" key="1"/>
<evidence type="ECO:0000255" key="2"/>
<evidence type="ECO:0000255" key="3">
    <source>
        <dbReference type="PROSITE-ProRule" id="PRU00794"/>
    </source>
</evidence>
<evidence type="ECO:0000269" key="4">
    <source>
    </source>
</evidence>
<evidence type="ECO:0000269" key="5">
    <source>
    </source>
</evidence>
<evidence type="ECO:0000305" key="6"/>